<organismHost>
    <name type="scientific">Escherichia coli</name>
    <dbReference type="NCBI Taxonomy" id="562"/>
</organismHost>
<protein>
    <recommendedName>
        <fullName>Uncharacterized 6.6 kDa protein in segB-ipI intergenic region</fullName>
    </recommendedName>
    <alternativeName>
        <fullName>ORF2</fullName>
    </alternativeName>
</protein>
<reference key="1">
    <citation type="journal article" date="1985" name="J. Mol. Biol.">
        <title>Sequence organization and control of transcription in the bacteriophage T4 tRNA region.</title>
        <authorList>
            <person name="Broida J."/>
            <person name="Abelson J."/>
        </authorList>
    </citation>
    <scope>NUCLEOTIDE SEQUENCE [GENOMIC DNA]</scope>
</reference>
<reference key="2">
    <citation type="journal article" date="2003" name="Microbiol. Mol. Biol. Rev.">
        <title>Bacteriophage T4 genome.</title>
        <authorList>
            <person name="Miller E.S."/>
            <person name="Kutter E."/>
            <person name="Mosig G."/>
            <person name="Arisaka F."/>
            <person name="Kunisawa T."/>
            <person name="Ruger W."/>
        </authorList>
    </citation>
    <scope>NUCLEOTIDE SEQUENCE [LARGE SCALE GENOMIC DNA]</scope>
</reference>
<keyword id="KW-1185">Reference proteome</keyword>
<gene>
    <name type="primary">y07D</name>
    <name type="synonym">ipi.-1</name>
    <name type="synonym">trnA.4</name>
</gene>
<organism>
    <name type="scientific">Enterobacteria phage T4</name>
    <name type="common">Bacteriophage T4</name>
    <dbReference type="NCBI Taxonomy" id="10665"/>
    <lineage>
        <taxon>Viruses</taxon>
        <taxon>Duplodnaviria</taxon>
        <taxon>Heunggongvirae</taxon>
        <taxon>Uroviricota</taxon>
        <taxon>Caudoviricetes</taxon>
        <taxon>Straboviridae</taxon>
        <taxon>Tevenvirinae</taxon>
        <taxon>Tequatrovirus</taxon>
    </lineage>
</organism>
<feature type="chain" id="PRO_0000165153" description="Uncharacterized 6.6 kDa protein in segB-ipI intergenic region">
    <location>
        <begin position="1"/>
        <end position="61"/>
    </location>
</feature>
<proteinExistence type="predicted"/>
<sequence length="61" mass="6558">MKRCELIRNVAIAISASAFSFSMFVGFICGLLTTAENVFSLVVAFLIGLIAIVMDKISKGE</sequence>
<dbReference type="EMBL" id="X03016">
    <property type="protein sequence ID" value="CAA26804.1"/>
    <property type="molecule type" value="Genomic_DNA"/>
</dbReference>
<dbReference type="EMBL" id="AF158101">
    <property type="protein sequence ID" value="AAD42682.1"/>
    <property type="molecule type" value="Genomic_DNA"/>
</dbReference>
<dbReference type="RefSeq" id="NP_049748.1">
    <property type="nucleotide sequence ID" value="NC_000866.4"/>
</dbReference>
<dbReference type="GeneID" id="1258608"/>
<dbReference type="KEGG" id="vg:1258608"/>
<dbReference type="OrthoDB" id="26950at10239"/>
<dbReference type="Proteomes" id="UP000009087">
    <property type="component" value="Segment"/>
</dbReference>
<accession>P13322</accession>
<name>Y07D_BPT4</name>